<organism>
    <name type="scientific">Clostridium botulinum (strain Hall / ATCC 3502 / NCTC 13319 / Type A)</name>
    <dbReference type="NCBI Taxonomy" id="441771"/>
    <lineage>
        <taxon>Bacteria</taxon>
        <taxon>Bacillati</taxon>
        <taxon>Bacillota</taxon>
        <taxon>Clostridia</taxon>
        <taxon>Eubacteriales</taxon>
        <taxon>Clostridiaceae</taxon>
        <taxon>Clostridium</taxon>
    </lineage>
</organism>
<comment type="function">
    <text evidence="1">One of several proteins that assist in the late maturation steps of the functional core of the 30S ribosomal subunit. Helps release RbfA from mature subunits. May play a role in the assembly of ribosomal proteins into the subunit. Circularly permuted GTPase that catalyzes slow GTP hydrolysis, GTPase activity is stimulated by the 30S ribosomal subunit.</text>
</comment>
<comment type="cofactor">
    <cofactor evidence="1">
        <name>Zn(2+)</name>
        <dbReference type="ChEBI" id="CHEBI:29105"/>
    </cofactor>
    <text evidence="1">Binds 1 zinc ion per subunit.</text>
</comment>
<comment type="subunit">
    <text evidence="1">Monomer. Associates with 30S ribosomal subunit, binds 16S rRNA.</text>
</comment>
<comment type="subcellular location">
    <subcellularLocation>
        <location evidence="1">Cytoplasm</location>
    </subcellularLocation>
</comment>
<comment type="similarity">
    <text evidence="1">Belongs to the TRAFAC class YlqF/YawG GTPase family. RsgA subfamily.</text>
</comment>
<sequence length="292" mass="33764">MKGTIIKGIGGFYYIKIDNSEEIIECKARGKFRHTELTPMIGDYVEISIDKNNKGAIEKIYERRSELFRPAVANVTQALVVFSFKNPDINIDLLNKFLLLCEYNNLKAIVCFNKMDLVNKEDYKDIISMIEQAGYDIIFLNAKEERNMDIIKKLIKDNVTVFCGPSGVGKSTMLNKIIGKETMITGNISEKLKRGKHTTRHSELIYVDEGLLVDTPGFSSLDINFMEKEDLLHCIPEFRDFIGECKFTGCLHHREPNCAVKKAVEEGHIHKDRYNFYIKTLEEFMNRRKKKW</sequence>
<protein>
    <recommendedName>
        <fullName evidence="1">Small ribosomal subunit biogenesis GTPase RsgA</fullName>
        <ecNumber evidence="1">3.6.1.-</ecNumber>
    </recommendedName>
</protein>
<accession>A5I4T1</accession>
<accession>A7G5Y6</accession>
<evidence type="ECO:0000255" key="1">
    <source>
        <dbReference type="HAMAP-Rule" id="MF_01820"/>
    </source>
</evidence>
<evidence type="ECO:0000255" key="2">
    <source>
        <dbReference type="PROSITE-ProRule" id="PRU01058"/>
    </source>
</evidence>
<name>RSGA_CLOBH</name>
<keyword id="KW-0963">Cytoplasm</keyword>
<keyword id="KW-0342">GTP-binding</keyword>
<keyword id="KW-0378">Hydrolase</keyword>
<keyword id="KW-0479">Metal-binding</keyword>
<keyword id="KW-0547">Nucleotide-binding</keyword>
<keyword id="KW-1185">Reference proteome</keyword>
<keyword id="KW-0690">Ribosome biogenesis</keyword>
<keyword id="KW-0694">RNA-binding</keyword>
<keyword id="KW-0699">rRNA-binding</keyword>
<keyword id="KW-0862">Zinc</keyword>
<dbReference type="EC" id="3.6.1.-" evidence="1"/>
<dbReference type="EMBL" id="CP000727">
    <property type="protein sequence ID" value="ABS38446.1"/>
    <property type="molecule type" value="Genomic_DNA"/>
</dbReference>
<dbReference type="EMBL" id="AM412317">
    <property type="protein sequence ID" value="CAL84054.1"/>
    <property type="molecule type" value="Genomic_DNA"/>
</dbReference>
<dbReference type="RefSeq" id="WP_011986840.1">
    <property type="nucleotide sequence ID" value="NC_009698.1"/>
</dbReference>
<dbReference type="RefSeq" id="YP_001254998.1">
    <property type="nucleotide sequence ID" value="NC_009495.1"/>
</dbReference>
<dbReference type="RefSeq" id="YP_001388201.1">
    <property type="nucleotide sequence ID" value="NC_009698.1"/>
</dbReference>
<dbReference type="SMR" id="A5I4T1"/>
<dbReference type="GeneID" id="5186758"/>
<dbReference type="KEGG" id="cbh:CLC_2358"/>
<dbReference type="KEGG" id="cbo:CBO2503"/>
<dbReference type="PATRIC" id="fig|413999.7.peg.2481"/>
<dbReference type="HOGENOM" id="CLU_033617_2_1_9"/>
<dbReference type="PRO" id="PR:A5I4T1"/>
<dbReference type="Proteomes" id="UP000001986">
    <property type="component" value="Chromosome"/>
</dbReference>
<dbReference type="GO" id="GO:0005737">
    <property type="term" value="C:cytoplasm"/>
    <property type="evidence" value="ECO:0007669"/>
    <property type="project" value="UniProtKB-SubCell"/>
</dbReference>
<dbReference type="GO" id="GO:0005525">
    <property type="term" value="F:GTP binding"/>
    <property type="evidence" value="ECO:0007669"/>
    <property type="project" value="UniProtKB-UniRule"/>
</dbReference>
<dbReference type="GO" id="GO:0003924">
    <property type="term" value="F:GTPase activity"/>
    <property type="evidence" value="ECO:0000318"/>
    <property type="project" value="GO_Central"/>
</dbReference>
<dbReference type="GO" id="GO:0046872">
    <property type="term" value="F:metal ion binding"/>
    <property type="evidence" value="ECO:0007669"/>
    <property type="project" value="UniProtKB-KW"/>
</dbReference>
<dbReference type="GO" id="GO:0019843">
    <property type="term" value="F:rRNA binding"/>
    <property type="evidence" value="ECO:0007669"/>
    <property type="project" value="UniProtKB-KW"/>
</dbReference>
<dbReference type="GO" id="GO:0042274">
    <property type="term" value="P:ribosomal small subunit biogenesis"/>
    <property type="evidence" value="ECO:0007669"/>
    <property type="project" value="UniProtKB-UniRule"/>
</dbReference>
<dbReference type="GO" id="GO:0006412">
    <property type="term" value="P:translation"/>
    <property type="evidence" value="ECO:0000318"/>
    <property type="project" value="GO_Central"/>
</dbReference>
<dbReference type="CDD" id="cd04466">
    <property type="entry name" value="S1_YloQ_GTPase"/>
    <property type="match status" value="1"/>
</dbReference>
<dbReference type="CDD" id="cd01854">
    <property type="entry name" value="YjeQ_EngC"/>
    <property type="match status" value="1"/>
</dbReference>
<dbReference type="Gene3D" id="2.40.50.140">
    <property type="entry name" value="Nucleic acid-binding proteins"/>
    <property type="match status" value="1"/>
</dbReference>
<dbReference type="Gene3D" id="3.40.50.300">
    <property type="entry name" value="P-loop containing nucleotide triphosphate hydrolases"/>
    <property type="match status" value="1"/>
</dbReference>
<dbReference type="Gene3D" id="1.10.40.50">
    <property type="entry name" value="Probable gtpase engc, domain 3"/>
    <property type="match status" value="1"/>
</dbReference>
<dbReference type="HAMAP" id="MF_01820">
    <property type="entry name" value="GTPase_RsgA"/>
    <property type="match status" value="1"/>
</dbReference>
<dbReference type="InterPro" id="IPR030378">
    <property type="entry name" value="G_CP_dom"/>
</dbReference>
<dbReference type="InterPro" id="IPR012340">
    <property type="entry name" value="NA-bd_OB-fold"/>
</dbReference>
<dbReference type="InterPro" id="IPR027417">
    <property type="entry name" value="P-loop_NTPase"/>
</dbReference>
<dbReference type="InterPro" id="IPR004881">
    <property type="entry name" value="Ribosome_biogen_GTPase_RsgA"/>
</dbReference>
<dbReference type="InterPro" id="IPR010914">
    <property type="entry name" value="RsgA_GTPase_dom"/>
</dbReference>
<dbReference type="InterPro" id="IPR031944">
    <property type="entry name" value="RsgA_N"/>
</dbReference>
<dbReference type="NCBIfam" id="TIGR00157">
    <property type="entry name" value="ribosome small subunit-dependent GTPase A"/>
    <property type="match status" value="1"/>
</dbReference>
<dbReference type="PANTHER" id="PTHR32120">
    <property type="entry name" value="SMALL RIBOSOMAL SUBUNIT BIOGENESIS GTPASE RSGA"/>
    <property type="match status" value="1"/>
</dbReference>
<dbReference type="PANTHER" id="PTHR32120:SF11">
    <property type="entry name" value="SMALL RIBOSOMAL SUBUNIT BIOGENESIS GTPASE RSGA 1, MITOCHONDRIAL-RELATED"/>
    <property type="match status" value="1"/>
</dbReference>
<dbReference type="Pfam" id="PF03193">
    <property type="entry name" value="RsgA_GTPase"/>
    <property type="match status" value="1"/>
</dbReference>
<dbReference type="Pfam" id="PF16745">
    <property type="entry name" value="RsgA_N"/>
    <property type="match status" value="1"/>
</dbReference>
<dbReference type="SUPFAM" id="SSF50249">
    <property type="entry name" value="Nucleic acid-binding proteins"/>
    <property type="match status" value="1"/>
</dbReference>
<dbReference type="SUPFAM" id="SSF52540">
    <property type="entry name" value="P-loop containing nucleoside triphosphate hydrolases"/>
    <property type="match status" value="1"/>
</dbReference>
<dbReference type="PROSITE" id="PS50936">
    <property type="entry name" value="ENGC_GTPASE"/>
    <property type="match status" value="1"/>
</dbReference>
<dbReference type="PROSITE" id="PS51721">
    <property type="entry name" value="G_CP"/>
    <property type="match status" value="1"/>
</dbReference>
<reference key="1">
    <citation type="journal article" date="2007" name="Genome Res.">
        <title>Genome sequence of a proteolytic (Group I) Clostridium botulinum strain Hall A and comparative analysis of the clostridial genomes.</title>
        <authorList>
            <person name="Sebaihia M."/>
            <person name="Peck M.W."/>
            <person name="Minton N.P."/>
            <person name="Thomson N.R."/>
            <person name="Holden M.T.G."/>
            <person name="Mitchell W.J."/>
            <person name="Carter A.T."/>
            <person name="Bentley S.D."/>
            <person name="Mason D.R."/>
            <person name="Crossman L."/>
            <person name="Paul C.J."/>
            <person name="Ivens A."/>
            <person name="Wells-Bennik M.H.J."/>
            <person name="Davis I.J."/>
            <person name="Cerdeno-Tarraga A.M."/>
            <person name="Churcher C."/>
            <person name="Quail M.A."/>
            <person name="Chillingworth T."/>
            <person name="Feltwell T."/>
            <person name="Fraser A."/>
            <person name="Goodhead I."/>
            <person name="Hance Z."/>
            <person name="Jagels K."/>
            <person name="Larke N."/>
            <person name="Maddison M."/>
            <person name="Moule S."/>
            <person name="Mungall K."/>
            <person name="Norbertczak H."/>
            <person name="Rabbinowitsch E."/>
            <person name="Sanders M."/>
            <person name="Simmonds M."/>
            <person name="White B."/>
            <person name="Whithead S."/>
            <person name="Parkhill J."/>
        </authorList>
    </citation>
    <scope>NUCLEOTIDE SEQUENCE [LARGE SCALE GENOMIC DNA]</scope>
    <source>
        <strain>Hall / ATCC 3502 / NCTC 13319 / Type A</strain>
    </source>
</reference>
<reference key="2">
    <citation type="journal article" date="2007" name="PLoS ONE">
        <title>Analysis of the neurotoxin complex genes in Clostridium botulinum A1-A4 and B1 strains: BoNT/A3, /Ba4 and /B1 clusters are located within plasmids.</title>
        <authorList>
            <person name="Smith T.J."/>
            <person name="Hill K.K."/>
            <person name="Foley B.T."/>
            <person name="Detter J.C."/>
            <person name="Munk A.C."/>
            <person name="Bruce D.C."/>
            <person name="Doggett N.A."/>
            <person name="Smith L.A."/>
            <person name="Marks J.D."/>
            <person name="Xie G."/>
            <person name="Brettin T.S."/>
        </authorList>
    </citation>
    <scope>NUCLEOTIDE SEQUENCE [LARGE SCALE GENOMIC DNA]</scope>
    <source>
        <strain>Hall / ATCC 3502 / NCTC 13319 / Type A</strain>
    </source>
</reference>
<gene>
    <name evidence="1" type="primary">rsgA</name>
    <name type="ordered locus">CBO2503</name>
    <name type="ordered locus">CLC_2358</name>
</gene>
<feature type="chain" id="PRO_1000188048" description="Small ribosomal subunit biogenesis GTPase RsgA">
    <location>
        <begin position="1"/>
        <end position="292"/>
    </location>
</feature>
<feature type="domain" description="CP-type G" evidence="2">
    <location>
        <begin position="64"/>
        <end position="221"/>
    </location>
</feature>
<feature type="binding site" evidence="1">
    <location>
        <begin position="113"/>
        <end position="116"/>
    </location>
    <ligand>
        <name>GTP</name>
        <dbReference type="ChEBI" id="CHEBI:37565"/>
    </ligand>
</feature>
<feature type="binding site" evidence="1">
    <location>
        <begin position="164"/>
        <end position="172"/>
    </location>
    <ligand>
        <name>GTP</name>
        <dbReference type="ChEBI" id="CHEBI:37565"/>
    </ligand>
</feature>
<feature type="binding site" evidence="1">
    <location>
        <position position="245"/>
    </location>
    <ligand>
        <name>Zn(2+)</name>
        <dbReference type="ChEBI" id="CHEBI:29105"/>
    </ligand>
</feature>
<feature type="binding site" evidence="1">
    <location>
        <position position="250"/>
    </location>
    <ligand>
        <name>Zn(2+)</name>
        <dbReference type="ChEBI" id="CHEBI:29105"/>
    </ligand>
</feature>
<feature type="binding site" evidence="1">
    <location>
        <position position="252"/>
    </location>
    <ligand>
        <name>Zn(2+)</name>
        <dbReference type="ChEBI" id="CHEBI:29105"/>
    </ligand>
</feature>
<feature type="binding site" evidence="1">
    <location>
        <position position="258"/>
    </location>
    <ligand>
        <name>Zn(2+)</name>
        <dbReference type="ChEBI" id="CHEBI:29105"/>
    </ligand>
</feature>
<proteinExistence type="inferred from homology"/>